<protein>
    <recommendedName>
        <fullName evidence="1">UPF0260 protein YcgN</fullName>
    </recommendedName>
</protein>
<evidence type="ECO:0000255" key="1">
    <source>
        <dbReference type="HAMAP-Rule" id="MF_00676"/>
    </source>
</evidence>
<proteinExistence type="inferred from homology"/>
<feature type="chain" id="PRO_1000131636" description="UPF0260 protein YcgN">
    <location>
        <begin position="1"/>
        <end position="148"/>
    </location>
</feature>
<sequence>MSDTPFWQRKTLDEMTDAEWESLCDGCGQCCLHKLMDEDTDEIYFTNVACRQLNIKTCQCRHYERRFEFEPDCIKLTRENLPDFEWLPMTCAYRLLAEGKPLPTWHPLLTGSKAAMHGERISVRHIAVKESEVRDWQDHILNKPSWAE</sequence>
<dbReference type="EMBL" id="FM200053">
    <property type="protein sequence ID" value="CAR59143.1"/>
    <property type="molecule type" value="Genomic_DNA"/>
</dbReference>
<dbReference type="RefSeq" id="WP_001285703.1">
    <property type="nucleotide sequence ID" value="NC_011147.1"/>
</dbReference>
<dbReference type="SMR" id="B5BHE5"/>
<dbReference type="KEGG" id="sek:SSPA0992"/>
<dbReference type="HOGENOM" id="CLU_109769_2_0_6"/>
<dbReference type="Proteomes" id="UP000001869">
    <property type="component" value="Chromosome"/>
</dbReference>
<dbReference type="HAMAP" id="MF_00676">
    <property type="entry name" value="UPF0260"/>
    <property type="match status" value="1"/>
</dbReference>
<dbReference type="InterPro" id="IPR005358">
    <property type="entry name" value="Puta_zinc/iron-chelating_dom"/>
</dbReference>
<dbReference type="InterPro" id="IPR008228">
    <property type="entry name" value="UCP006173"/>
</dbReference>
<dbReference type="NCBIfam" id="NF003498">
    <property type="entry name" value="PRK05170.1-1"/>
    <property type="match status" value="1"/>
</dbReference>
<dbReference type="NCBIfam" id="NF003501">
    <property type="entry name" value="PRK05170.1-5"/>
    <property type="match status" value="1"/>
</dbReference>
<dbReference type="NCBIfam" id="NF003503">
    <property type="entry name" value="PRK05170.2-1"/>
    <property type="match status" value="1"/>
</dbReference>
<dbReference type="NCBIfam" id="NF003507">
    <property type="entry name" value="PRK05170.2-5"/>
    <property type="match status" value="1"/>
</dbReference>
<dbReference type="PANTHER" id="PTHR37421">
    <property type="entry name" value="UPF0260 PROTEIN YCGN"/>
    <property type="match status" value="1"/>
</dbReference>
<dbReference type="PANTHER" id="PTHR37421:SF1">
    <property type="entry name" value="UPF0260 PROTEIN YCGN"/>
    <property type="match status" value="1"/>
</dbReference>
<dbReference type="Pfam" id="PF03692">
    <property type="entry name" value="CxxCxxCC"/>
    <property type="match status" value="1"/>
</dbReference>
<dbReference type="PIRSF" id="PIRSF006173">
    <property type="entry name" value="UCP006173"/>
    <property type="match status" value="1"/>
</dbReference>
<organism>
    <name type="scientific">Salmonella paratyphi A (strain AKU_12601)</name>
    <dbReference type="NCBI Taxonomy" id="554290"/>
    <lineage>
        <taxon>Bacteria</taxon>
        <taxon>Pseudomonadati</taxon>
        <taxon>Pseudomonadota</taxon>
        <taxon>Gammaproteobacteria</taxon>
        <taxon>Enterobacterales</taxon>
        <taxon>Enterobacteriaceae</taxon>
        <taxon>Salmonella</taxon>
    </lineage>
</organism>
<comment type="similarity">
    <text evidence="1">Belongs to the UPF0260 family.</text>
</comment>
<gene>
    <name evidence="1" type="primary">ycgN</name>
    <name type="ordered locus">SSPA0992</name>
</gene>
<accession>B5BHE5</accession>
<reference key="1">
    <citation type="journal article" date="2009" name="BMC Genomics">
        <title>Pseudogene accumulation in the evolutionary histories of Salmonella enterica serovars Paratyphi A and Typhi.</title>
        <authorList>
            <person name="Holt K.E."/>
            <person name="Thomson N.R."/>
            <person name="Wain J."/>
            <person name="Langridge G.C."/>
            <person name="Hasan R."/>
            <person name="Bhutta Z.A."/>
            <person name="Quail M.A."/>
            <person name="Norbertczak H."/>
            <person name="Walker D."/>
            <person name="Simmonds M."/>
            <person name="White B."/>
            <person name="Bason N."/>
            <person name="Mungall K."/>
            <person name="Dougan G."/>
            <person name="Parkhill J."/>
        </authorList>
    </citation>
    <scope>NUCLEOTIDE SEQUENCE [LARGE SCALE GENOMIC DNA]</scope>
    <source>
        <strain>AKU_12601</strain>
    </source>
</reference>
<name>YCGN_SALPK</name>